<reference key="1">
    <citation type="submission" date="2002-01" db="EMBL/GenBank/DDBJ databases">
        <authorList>
            <person name="Suwabe N."/>
            <person name="Minegishi N."/>
            <person name="Yamamoto M."/>
        </authorList>
    </citation>
    <scope>NUCLEOTIDE SEQUENCE [MRNA]</scope>
    <source>
        <tissue>Liver</tissue>
    </source>
</reference>
<reference key="2">
    <citation type="journal article" date="1998" name="J. Biol. Chem.">
        <title>Alternative promoters regulate transcription of the mouse GATA-2 gene.</title>
        <authorList>
            <person name="Minegishi N."/>
            <person name="Ohta J."/>
            <person name="Suwabe N."/>
            <person name="Nakauchi H."/>
            <person name="Ishihara H."/>
            <person name="Hayashi N."/>
            <person name="Yamamoto M."/>
        </authorList>
    </citation>
    <scope>GENOMIC ORGANIZATION</scope>
</reference>
<reference key="3">
    <citation type="journal article" date="2011" name="Proc. Natl. Acad. Sci. U.S.A.">
        <title>Bromodomain protein Brd3 associates with acetylated GATA1 to promote its chromatin occupancy at erythroid target genes.</title>
        <authorList>
            <person name="Lamonica J.M."/>
            <person name="Deng W."/>
            <person name="Kadauke S."/>
            <person name="Campbell A.E."/>
            <person name="Gamsjaeger R."/>
            <person name="Wang H."/>
            <person name="Cheng Y."/>
            <person name="Billin A.N."/>
            <person name="Hardison R.C."/>
            <person name="Mackay J.P."/>
            <person name="Blobel G.A."/>
        </authorList>
    </citation>
    <scope>INTERACTION WITH BRD3</scope>
</reference>
<reference key="4">
    <citation type="journal article" date="2022" name="Sci. Transl. Med.">
        <title>Pathogenic variants in MDFIC cause recessive central conducting lymphatic anomaly with lymphedema.</title>
        <authorList>
            <person name="Byrne A.B."/>
            <person name="Brouillard P."/>
            <person name="Sutton D.L."/>
            <person name="Kazenwadel J."/>
            <person name="Montazaribarforoushi S."/>
            <person name="Secker G.A."/>
            <person name="Oszmiana A."/>
            <person name="Babic M."/>
            <person name="Betterman K.L."/>
            <person name="Brautigan P.J."/>
            <person name="White M."/>
            <person name="Piltz S.G."/>
            <person name="Thomas P.Q."/>
            <person name="Hahn C.N."/>
            <person name="Rath M."/>
            <person name="Felbor U."/>
            <person name="Korenke G.C."/>
            <person name="Smith C.L."/>
            <person name="Wood K.H."/>
            <person name="Sheppard S.E."/>
            <person name="Adams D.M."/>
            <person name="Kariminejad A."/>
            <person name="Helaers R."/>
            <person name="Boon L.M."/>
            <person name="Revencu N."/>
            <person name="Moore L."/>
            <person name="Barnett C."/>
            <person name="Haan E."/>
            <person name="Arts P."/>
            <person name="Vikkula M."/>
            <person name="Scott H.S."/>
            <person name="Harvey N.L."/>
        </authorList>
    </citation>
    <scope>INTERACTION WITH MDFIC</scope>
</reference>
<sequence>MEVAPEQPRWMAHPAVLNAQHPDSHHPGLAHNYMEPAQLLPPDEVDVFFNHLDSQGNPYYANPAHARARVSYSPAHARLTGGQMCRPHLLHSPGLPWLDGGKAALSAAAAHHHSPWTVSPFSKTPLHPSAAGAPGGPLSVYPGAAGGSGGGSGSSVASLTPTAAHSGSHLFGFPPTPPKEVSPDPSTTGAASPASSSAGGSVARGEDKDGVKYQVSLSESMKMEGGSPLRPGLATMGTQPATHHPIPTYPSYVPAAAHDYGSSLFHPGGFLGGPASSFTPKQRSKARSCSEGRECVNCGATATPLWRRDGTGHYLCNACGLYHKMNGQNRPLIKPKRRLSAARRAGTCCANCQTTTTTLWRRNANGDPVCNACGLYYKLHNVNRPLTMKKEGIQTRNRKMSSKSKKSKKGAECFEELSKCMQEKSPPFSAAALAGHMAPVGHLPPFSHSGHILPTPTPIHPSSSLSFGHPHPSSMVTAMG</sequence>
<dbReference type="EMBL" id="AB000096">
    <property type="protein sequence ID" value="BAA19053.2"/>
    <property type="molecule type" value="mRNA"/>
</dbReference>
<dbReference type="CCDS" id="CCDS20333.1"/>
<dbReference type="RefSeq" id="NP_001342182.1">
    <property type="nucleotide sequence ID" value="NM_001355253.1"/>
</dbReference>
<dbReference type="RefSeq" id="NP_032116.4">
    <property type="nucleotide sequence ID" value="NM_008090.5"/>
</dbReference>
<dbReference type="RefSeq" id="XP_006505602.1">
    <property type="nucleotide sequence ID" value="XM_006505539.3"/>
</dbReference>
<dbReference type="SMR" id="O09100"/>
<dbReference type="BioGRID" id="199839">
    <property type="interactions" value="4"/>
</dbReference>
<dbReference type="CORUM" id="O09100"/>
<dbReference type="FunCoup" id="O09100">
    <property type="interactions" value="1364"/>
</dbReference>
<dbReference type="STRING" id="10090.ENSMUSP00000015197"/>
<dbReference type="GlyGen" id="O09100">
    <property type="glycosylation" value="3 sites"/>
</dbReference>
<dbReference type="iPTMnet" id="O09100"/>
<dbReference type="PhosphoSitePlus" id="O09100"/>
<dbReference type="PaxDb" id="10090-ENSMUSP00000015197"/>
<dbReference type="ProteomicsDB" id="267565"/>
<dbReference type="ABCD" id="O09100">
    <property type="antibodies" value="28 sequenced antibodies"/>
</dbReference>
<dbReference type="Antibodypedia" id="788">
    <property type="antibodies" value="480 antibodies from 37 providers"/>
</dbReference>
<dbReference type="DNASU" id="14461"/>
<dbReference type="Ensembl" id="ENSMUST00000015197.9">
    <property type="protein sequence ID" value="ENSMUSP00000015197.8"/>
    <property type="gene ID" value="ENSMUSG00000015053.15"/>
</dbReference>
<dbReference type="Ensembl" id="ENSMUST00000170089.8">
    <property type="protein sequence ID" value="ENSMUSP00000128198.2"/>
    <property type="gene ID" value="ENSMUSG00000015053.15"/>
</dbReference>
<dbReference type="GeneID" id="14461"/>
<dbReference type="KEGG" id="mmu:14461"/>
<dbReference type="UCSC" id="uc009cvc.2">
    <property type="organism name" value="mouse"/>
</dbReference>
<dbReference type="AGR" id="MGI:95662"/>
<dbReference type="CTD" id="2624"/>
<dbReference type="MGI" id="MGI:95662">
    <property type="gene designation" value="Gata2"/>
</dbReference>
<dbReference type="VEuPathDB" id="HostDB:ENSMUSG00000015053"/>
<dbReference type="eggNOG" id="KOG1601">
    <property type="taxonomic scope" value="Eukaryota"/>
</dbReference>
<dbReference type="GeneTree" id="ENSGT00940000156315"/>
<dbReference type="HOGENOM" id="CLU_027524_1_0_1"/>
<dbReference type="InParanoid" id="O09100"/>
<dbReference type="OMA" id="SKCMHEK"/>
<dbReference type="OrthoDB" id="2162994at2759"/>
<dbReference type="PhylomeDB" id="O09100"/>
<dbReference type="TreeFam" id="TF315391"/>
<dbReference type="Reactome" id="R-MMU-8939236">
    <property type="pathway name" value="RUNX1 regulates transcription of genes involved in differentiation of HSCs"/>
</dbReference>
<dbReference type="Reactome" id="R-MMU-983231">
    <property type="pathway name" value="Factors involved in megakaryocyte development and platelet production"/>
</dbReference>
<dbReference type="BioGRID-ORCS" id="14461">
    <property type="hits" value="8 hits in 78 CRISPR screens"/>
</dbReference>
<dbReference type="ChiTaRS" id="Gata2">
    <property type="organism name" value="mouse"/>
</dbReference>
<dbReference type="PRO" id="PR:O09100"/>
<dbReference type="Proteomes" id="UP000000589">
    <property type="component" value="Chromosome 6"/>
</dbReference>
<dbReference type="RNAct" id="O09100">
    <property type="molecule type" value="protein"/>
</dbReference>
<dbReference type="Bgee" id="ENSMUSG00000015053">
    <property type="expression patterns" value="Expressed in seminal vesicle and 239 other cell types or tissues"/>
</dbReference>
<dbReference type="ExpressionAtlas" id="O09100">
    <property type="expression patterns" value="baseline and differential"/>
</dbReference>
<dbReference type="GO" id="GO:0005737">
    <property type="term" value="C:cytoplasm"/>
    <property type="evidence" value="ECO:0007669"/>
    <property type="project" value="Ensembl"/>
</dbReference>
<dbReference type="GO" id="GO:0005654">
    <property type="term" value="C:nucleoplasm"/>
    <property type="evidence" value="ECO:0000304"/>
    <property type="project" value="Reactome"/>
</dbReference>
<dbReference type="GO" id="GO:0005634">
    <property type="term" value="C:nucleus"/>
    <property type="evidence" value="ECO:0000314"/>
    <property type="project" value="MGI"/>
</dbReference>
<dbReference type="GO" id="GO:0005667">
    <property type="term" value="C:transcription regulator complex"/>
    <property type="evidence" value="ECO:0000314"/>
    <property type="project" value="MGI"/>
</dbReference>
<dbReference type="GO" id="GO:0070742">
    <property type="term" value="F:C2H2 zinc finger domain binding"/>
    <property type="evidence" value="ECO:0007669"/>
    <property type="project" value="Ensembl"/>
</dbReference>
<dbReference type="GO" id="GO:0003682">
    <property type="term" value="F:chromatin binding"/>
    <property type="evidence" value="ECO:0000314"/>
    <property type="project" value="MGI"/>
</dbReference>
<dbReference type="GO" id="GO:0003677">
    <property type="term" value="F:DNA binding"/>
    <property type="evidence" value="ECO:0000314"/>
    <property type="project" value="MGI"/>
</dbReference>
<dbReference type="GO" id="GO:0001228">
    <property type="term" value="F:DNA-binding transcription activator activity, RNA polymerase II-specific"/>
    <property type="evidence" value="ECO:0000314"/>
    <property type="project" value="MGI"/>
</dbReference>
<dbReference type="GO" id="GO:0000978">
    <property type="term" value="F:RNA polymerase II cis-regulatory region sequence-specific DNA binding"/>
    <property type="evidence" value="ECO:0000314"/>
    <property type="project" value="MGI"/>
</dbReference>
<dbReference type="GO" id="GO:0061629">
    <property type="term" value="F:RNA polymerase II-specific DNA-binding transcription factor binding"/>
    <property type="evidence" value="ECO:0007669"/>
    <property type="project" value="Ensembl"/>
</dbReference>
<dbReference type="GO" id="GO:0001223">
    <property type="term" value="F:transcription coactivator binding"/>
    <property type="evidence" value="ECO:0000353"/>
    <property type="project" value="BHF-UCL"/>
</dbReference>
<dbReference type="GO" id="GO:0008270">
    <property type="term" value="F:zinc ion binding"/>
    <property type="evidence" value="ECO:0007669"/>
    <property type="project" value="UniProtKB-KW"/>
</dbReference>
<dbReference type="GO" id="GO:0001525">
    <property type="term" value="P:angiogenesis"/>
    <property type="evidence" value="ECO:0000315"/>
    <property type="project" value="MGI"/>
</dbReference>
<dbReference type="GO" id="GO:0050873">
    <property type="term" value="P:brown fat cell differentiation"/>
    <property type="evidence" value="ECO:0000315"/>
    <property type="project" value="MGI"/>
</dbReference>
<dbReference type="GO" id="GO:0021533">
    <property type="term" value="P:cell differentiation in hindbrain"/>
    <property type="evidence" value="ECO:0000315"/>
    <property type="project" value="MGI"/>
</dbReference>
<dbReference type="GO" id="GO:0001709">
    <property type="term" value="P:cell fate determination"/>
    <property type="evidence" value="ECO:0000314"/>
    <property type="project" value="MGI"/>
</dbReference>
<dbReference type="GO" id="GO:0021954">
    <property type="term" value="P:central nervous system neuron development"/>
    <property type="evidence" value="ECO:0000315"/>
    <property type="project" value="MGI"/>
</dbReference>
<dbReference type="GO" id="GO:0021953">
    <property type="term" value="P:central nervous system neuron differentiation"/>
    <property type="evidence" value="ECO:0000315"/>
    <property type="project" value="MGI"/>
</dbReference>
<dbReference type="GO" id="GO:0090102">
    <property type="term" value="P:cochlea development"/>
    <property type="evidence" value="ECO:0007669"/>
    <property type="project" value="Ensembl"/>
</dbReference>
<dbReference type="GO" id="GO:0021902">
    <property type="term" value="P:commitment of neuronal cell to specific neuron type in forebrain"/>
    <property type="evidence" value="ECO:0000315"/>
    <property type="project" value="MGI"/>
</dbReference>
<dbReference type="GO" id="GO:0060216">
    <property type="term" value="P:definitive hemopoiesis"/>
    <property type="evidence" value="ECO:0000315"/>
    <property type="project" value="MGI"/>
</dbReference>
<dbReference type="GO" id="GO:0001892">
    <property type="term" value="P:embryonic placenta development"/>
    <property type="evidence" value="ECO:0000315"/>
    <property type="project" value="MGI"/>
</dbReference>
<dbReference type="GO" id="GO:0035854">
    <property type="term" value="P:eosinophil fate commitment"/>
    <property type="evidence" value="ECO:0007669"/>
    <property type="project" value="Ensembl"/>
</dbReference>
<dbReference type="GO" id="GO:0097154">
    <property type="term" value="P:GABAergic neuron differentiation"/>
    <property type="evidence" value="ECO:0000315"/>
    <property type="project" value="MGI"/>
</dbReference>
<dbReference type="GO" id="GO:0002067">
    <property type="term" value="P:glandular epithelial cell differentiation"/>
    <property type="evidence" value="ECO:0000315"/>
    <property type="project" value="MGI"/>
</dbReference>
<dbReference type="GO" id="GO:0002071">
    <property type="term" value="P:glandular epithelial cell maturation"/>
    <property type="evidence" value="ECO:0000315"/>
    <property type="project" value="MGI"/>
</dbReference>
<dbReference type="GO" id="GO:0002244">
    <property type="term" value="P:hematopoietic progenitor cell differentiation"/>
    <property type="evidence" value="ECO:0000315"/>
    <property type="project" value="MGI"/>
</dbReference>
<dbReference type="GO" id="GO:0061484">
    <property type="term" value="P:hematopoietic stem cell homeostasis"/>
    <property type="evidence" value="ECO:0000315"/>
    <property type="project" value="MGI"/>
</dbReference>
<dbReference type="GO" id="GO:0048873">
    <property type="term" value="P:homeostasis of number of cells within a tissue"/>
    <property type="evidence" value="ECO:0000315"/>
    <property type="project" value="MGI"/>
</dbReference>
<dbReference type="GO" id="GO:0042472">
    <property type="term" value="P:inner ear morphogenesis"/>
    <property type="evidence" value="ECO:0000315"/>
    <property type="project" value="MGI"/>
</dbReference>
<dbReference type="GO" id="GO:0030099">
    <property type="term" value="P:myeloid cell differentiation"/>
    <property type="evidence" value="ECO:0000315"/>
    <property type="project" value="MGI"/>
</dbReference>
<dbReference type="GO" id="GO:1903444">
    <property type="term" value="P:negative regulation of brown fat cell differentiation"/>
    <property type="evidence" value="ECO:0000315"/>
    <property type="project" value="MGI"/>
</dbReference>
<dbReference type="GO" id="GO:2000352">
    <property type="term" value="P:negative regulation of endothelial cell apoptotic process"/>
    <property type="evidence" value="ECO:0007669"/>
    <property type="project" value="Ensembl"/>
</dbReference>
<dbReference type="GO" id="GO:0010629">
    <property type="term" value="P:negative regulation of gene expression"/>
    <property type="evidence" value="ECO:0007669"/>
    <property type="project" value="Ensembl"/>
</dbReference>
<dbReference type="GO" id="GO:1901533">
    <property type="term" value="P:negative regulation of hematopoietic progenitor cell differentiation"/>
    <property type="evidence" value="ECO:0000315"/>
    <property type="project" value="MGI"/>
</dbReference>
<dbReference type="GO" id="GO:0045650">
    <property type="term" value="P:negative regulation of macrophage differentiation"/>
    <property type="evidence" value="ECO:0000314"/>
    <property type="project" value="MGI"/>
</dbReference>
<dbReference type="GO" id="GO:0045638">
    <property type="term" value="P:negative regulation of myeloid cell differentiation"/>
    <property type="evidence" value="ECO:0000315"/>
    <property type="project" value="MGI"/>
</dbReference>
<dbReference type="GO" id="GO:2000178">
    <property type="term" value="P:negative regulation of neural precursor cell proliferation"/>
    <property type="evidence" value="ECO:0000266"/>
    <property type="project" value="MGI"/>
</dbReference>
<dbReference type="GO" id="GO:0007406">
    <property type="term" value="P:negative regulation of neuroblast proliferation"/>
    <property type="evidence" value="ECO:0000315"/>
    <property type="project" value="MGI"/>
</dbReference>
<dbReference type="GO" id="GO:0045746">
    <property type="term" value="P:negative regulation of Notch signaling pathway"/>
    <property type="evidence" value="ECO:0000266"/>
    <property type="project" value="MGI"/>
</dbReference>
<dbReference type="GO" id="GO:0000122">
    <property type="term" value="P:negative regulation of transcription by RNA polymerase II"/>
    <property type="evidence" value="ECO:0000314"/>
    <property type="project" value="MGI"/>
</dbReference>
<dbReference type="GO" id="GO:0061351">
    <property type="term" value="P:neural precursor cell proliferation"/>
    <property type="evidence" value="ECO:0000315"/>
    <property type="project" value="MGI"/>
</dbReference>
<dbReference type="GO" id="GO:0007405">
    <property type="term" value="P:neuroblast proliferation"/>
    <property type="evidence" value="ECO:0000315"/>
    <property type="project" value="MGI"/>
</dbReference>
<dbReference type="GO" id="GO:0061101">
    <property type="term" value="P:neuroendocrine cell differentiation"/>
    <property type="evidence" value="ECO:0000315"/>
    <property type="project" value="MGI"/>
</dbReference>
<dbReference type="GO" id="GO:0030182">
    <property type="term" value="P:neuron differentiation"/>
    <property type="evidence" value="ECO:0000315"/>
    <property type="project" value="MGI"/>
</dbReference>
<dbReference type="GO" id="GO:0048663">
    <property type="term" value="P:neuron fate commitment"/>
    <property type="evidence" value="ECO:0000315"/>
    <property type="project" value="MGI"/>
</dbReference>
<dbReference type="GO" id="GO:0042551">
    <property type="term" value="P:neuron maturation"/>
    <property type="evidence" value="ECO:0000315"/>
    <property type="project" value="MGI"/>
</dbReference>
<dbReference type="GO" id="GO:0001764">
    <property type="term" value="P:neuron migration"/>
    <property type="evidence" value="ECO:0007669"/>
    <property type="project" value="Ensembl"/>
</dbReference>
<dbReference type="GO" id="GO:0006909">
    <property type="term" value="P:phagocytosis"/>
    <property type="evidence" value="ECO:0007669"/>
    <property type="project" value="UniProtKB-KW"/>
</dbReference>
<dbReference type="GO" id="GO:0021983">
    <property type="term" value="P:pituitary gland development"/>
    <property type="evidence" value="ECO:0000315"/>
    <property type="project" value="MGI"/>
</dbReference>
<dbReference type="GO" id="GO:0045766">
    <property type="term" value="P:positive regulation of angiogenesis"/>
    <property type="evidence" value="ECO:0000315"/>
    <property type="project" value="MGI"/>
</dbReference>
<dbReference type="GO" id="GO:1903589">
    <property type="term" value="P:positive regulation of blood vessel endothelial cell proliferation involved in sprouting angiogenesis"/>
    <property type="evidence" value="ECO:0007669"/>
    <property type="project" value="Ensembl"/>
</dbReference>
<dbReference type="GO" id="GO:0090050">
    <property type="term" value="P:positive regulation of cell migration involved in sprouting angiogenesis"/>
    <property type="evidence" value="ECO:0007669"/>
    <property type="project" value="Ensembl"/>
</dbReference>
<dbReference type="GO" id="GO:0007204">
    <property type="term" value="P:positive regulation of cytosolic calcium ion concentration"/>
    <property type="evidence" value="ECO:0007669"/>
    <property type="project" value="Ensembl"/>
</dbReference>
<dbReference type="GO" id="GO:0045648">
    <property type="term" value="P:positive regulation of erythrocyte differentiation"/>
    <property type="evidence" value="ECO:0000314"/>
    <property type="project" value="MGI"/>
</dbReference>
<dbReference type="GO" id="GO:0010628">
    <property type="term" value="P:positive regulation of gene expression"/>
    <property type="evidence" value="ECO:0007669"/>
    <property type="project" value="Ensembl"/>
</dbReference>
<dbReference type="GO" id="GO:0043306">
    <property type="term" value="P:positive regulation of mast cell degranulation"/>
    <property type="evidence" value="ECO:0007669"/>
    <property type="project" value="Ensembl"/>
</dbReference>
<dbReference type="GO" id="GO:0045654">
    <property type="term" value="P:positive regulation of megakaryocyte differentiation"/>
    <property type="evidence" value="ECO:0000314"/>
    <property type="project" value="MGI"/>
</dbReference>
<dbReference type="GO" id="GO:1902895">
    <property type="term" value="P:positive regulation of miRNA transcription"/>
    <property type="evidence" value="ECO:0007669"/>
    <property type="project" value="Ensembl"/>
</dbReference>
<dbReference type="GO" id="GO:0045666">
    <property type="term" value="P:positive regulation of neuron differentiation"/>
    <property type="evidence" value="ECO:0007669"/>
    <property type="project" value="Ensembl"/>
</dbReference>
<dbReference type="GO" id="GO:0050766">
    <property type="term" value="P:positive regulation of phagocytosis"/>
    <property type="evidence" value="ECO:0000250"/>
    <property type="project" value="UniProtKB"/>
</dbReference>
<dbReference type="GO" id="GO:0060100">
    <property type="term" value="P:positive regulation of phagocytosis, engulfment"/>
    <property type="evidence" value="ECO:0007669"/>
    <property type="project" value="Ensembl"/>
</dbReference>
<dbReference type="GO" id="GO:0045944">
    <property type="term" value="P:positive regulation of transcription by RNA polymerase II"/>
    <property type="evidence" value="ECO:0000314"/>
    <property type="project" value="MGI"/>
</dbReference>
<dbReference type="GO" id="GO:2000977">
    <property type="term" value="P:regulation of forebrain neuron differentiation"/>
    <property type="evidence" value="ECO:0000315"/>
    <property type="project" value="MGI"/>
</dbReference>
<dbReference type="GO" id="GO:0010725">
    <property type="term" value="P:regulation of primitive erythrocyte differentiation"/>
    <property type="evidence" value="ECO:0000316"/>
    <property type="project" value="MGI"/>
</dbReference>
<dbReference type="GO" id="GO:0033993">
    <property type="term" value="P:response to lipid"/>
    <property type="evidence" value="ECO:0007669"/>
    <property type="project" value="Ensembl"/>
</dbReference>
<dbReference type="GO" id="GO:0060872">
    <property type="term" value="P:semicircular canal development"/>
    <property type="evidence" value="ECO:0000315"/>
    <property type="project" value="MGI"/>
</dbReference>
<dbReference type="GO" id="GO:0035019">
    <property type="term" value="P:somatic stem cell population maintenance"/>
    <property type="evidence" value="ECO:0000315"/>
    <property type="project" value="MGI"/>
</dbReference>
<dbReference type="GO" id="GO:0060129">
    <property type="term" value="P:thyroid-stimulating hormone-secreting cell differentiation"/>
    <property type="evidence" value="ECO:0000315"/>
    <property type="project" value="MGI"/>
</dbReference>
<dbReference type="GO" id="GO:0006366">
    <property type="term" value="P:transcription by RNA polymerase II"/>
    <property type="evidence" value="ECO:0000315"/>
    <property type="project" value="MGI"/>
</dbReference>
<dbReference type="GO" id="GO:0001655">
    <property type="term" value="P:urogenital system development"/>
    <property type="evidence" value="ECO:0000315"/>
    <property type="project" value="MGI"/>
</dbReference>
<dbReference type="GO" id="GO:0061042">
    <property type="term" value="P:vascular wound healing"/>
    <property type="evidence" value="ECO:0007669"/>
    <property type="project" value="Ensembl"/>
</dbReference>
<dbReference type="GO" id="GO:0021514">
    <property type="term" value="P:ventral spinal cord interneuron differentiation"/>
    <property type="evidence" value="ECO:0000315"/>
    <property type="project" value="MGI"/>
</dbReference>
<dbReference type="CDD" id="cd00202">
    <property type="entry name" value="ZnF_GATA"/>
    <property type="match status" value="2"/>
</dbReference>
<dbReference type="FunFam" id="3.30.50.10:FF:000001">
    <property type="entry name" value="GATA transcription factor (GATAd)"/>
    <property type="match status" value="1"/>
</dbReference>
<dbReference type="FunFam" id="3.30.50.10:FF:000032">
    <property type="entry name" value="Transcription factor GATA-3"/>
    <property type="match status" value="1"/>
</dbReference>
<dbReference type="Gene3D" id="3.30.50.10">
    <property type="entry name" value="Erythroid Transcription Factor GATA-1, subunit A"/>
    <property type="match status" value="2"/>
</dbReference>
<dbReference type="InterPro" id="IPR016374">
    <property type="entry name" value="TF_GATA-2/3"/>
</dbReference>
<dbReference type="InterPro" id="IPR039355">
    <property type="entry name" value="Transcription_factor_GATA"/>
</dbReference>
<dbReference type="InterPro" id="IPR000679">
    <property type="entry name" value="Znf_GATA"/>
</dbReference>
<dbReference type="InterPro" id="IPR013088">
    <property type="entry name" value="Znf_NHR/GATA"/>
</dbReference>
<dbReference type="PANTHER" id="PTHR10071:SF149">
    <property type="entry name" value="ENDOTHELIAL TRANSCRIPTION FACTOR GATA-2"/>
    <property type="match status" value="1"/>
</dbReference>
<dbReference type="PANTHER" id="PTHR10071">
    <property type="entry name" value="TRANSCRIPTION FACTOR GATA FAMILY MEMBER"/>
    <property type="match status" value="1"/>
</dbReference>
<dbReference type="Pfam" id="PF00320">
    <property type="entry name" value="GATA"/>
    <property type="match status" value="2"/>
</dbReference>
<dbReference type="PIRSF" id="PIRSF003027">
    <property type="entry name" value="TF_GATA-1/2/3"/>
    <property type="match status" value="1"/>
</dbReference>
<dbReference type="PRINTS" id="PR00619">
    <property type="entry name" value="GATAZNFINGER"/>
</dbReference>
<dbReference type="SMART" id="SM00401">
    <property type="entry name" value="ZnF_GATA"/>
    <property type="match status" value="2"/>
</dbReference>
<dbReference type="SUPFAM" id="SSF57716">
    <property type="entry name" value="Glucocorticoid receptor-like (DNA-binding domain)"/>
    <property type="match status" value="2"/>
</dbReference>
<dbReference type="PROSITE" id="PS00344">
    <property type="entry name" value="GATA_ZN_FINGER_1"/>
    <property type="match status" value="2"/>
</dbReference>
<dbReference type="PROSITE" id="PS50114">
    <property type="entry name" value="GATA_ZN_FINGER_2"/>
    <property type="match status" value="2"/>
</dbReference>
<name>GATA2_MOUSE</name>
<accession>O09100</accession>
<keyword id="KW-0010">Activator</keyword>
<keyword id="KW-0238">DNA-binding</keyword>
<keyword id="KW-1017">Isopeptide bond</keyword>
<keyword id="KW-0479">Metal-binding</keyword>
<keyword id="KW-0488">Methylation</keyword>
<keyword id="KW-0539">Nucleus</keyword>
<keyword id="KW-0581">Phagocytosis</keyword>
<keyword id="KW-0597">Phosphoprotein</keyword>
<keyword id="KW-1185">Reference proteome</keyword>
<keyword id="KW-0677">Repeat</keyword>
<keyword id="KW-0804">Transcription</keyword>
<keyword id="KW-0805">Transcription regulation</keyword>
<keyword id="KW-0832">Ubl conjugation</keyword>
<keyword id="KW-0862">Zinc</keyword>
<keyword id="KW-0863">Zinc-finger</keyword>
<organism>
    <name type="scientific">Mus musculus</name>
    <name type="common">Mouse</name>
    <dbReference type="NCBI Taxonomy" id="10090"/>
    <lineage>
        <taxon>Eukaryota</taxon>
        <taxon>Metazoa</taxon>
        <taxon>Chordata</taxon>
        <taxon>Craniata</taxon>
        <taxon>Vertebrata</taxon>
        <taxon>Euteleostomi</taxon>
        <taxon>Mammalia</taxon>
        <taxon>Eutheria</taxon>
        <taxon>Euarchontoglires</taxon>
        <taxon>Glires</taxon>
        <taxon>Rodentia</taxon>
        <taxon>Myomorpha</taxon>
        <taxon>Muroidea</taxon>
        <taxon>Muridae</taxon>
        <taxon>Murinae</taxon>
        <taxon>Mus</taxon>
        <taxon>Mus</taxon>
    </lineage>
</organism>
<comment type="function">
    <text>Transcriptional activator which regulates endothelin-1 gene expression in endothelial cells. Binds to the consensus sequence 5'-AGATAG-3'.</text>
</comment>
<comment type="subunit">
    <text evidence="1 4 5">Interacts with BRD3. Interacts with AR and CCAR1 (By similarity). Interacts with MDFIC (PubMed:35235341).</text>
</comment>
<comment type="subcellular location">
    <subcellularLocation>
        <location>Nucleus</location>
    </subcellularLocation>
</comment>
<protein>
    <recommendedName>
        <fullName>Endothelial transcription factor GATA-2</fullName>
    </recommendedName>
    <alternativeName>
        <fullName>GATA-binding protein 2</fullName>
    </alternativeName>
</protein>
<evidence type="ECO:0000250" key="1">
    <source>
        <dbReference type="UniProtKB" id="P23769"/>
    </source>
</evidence>
<evidence type="ECO:0000255" key="2">
    <source>
        <dbReference type="PROSITE-ProRule" id="PRU00094"/>
    </source>
</evidence>
<evidence type="ECO:0000256" key="3">
    <source>
        <dbReference type="SAM" id="MobiDB-lite"/>
    </source>
</evidence>
<evidence type="ECO:0000269" key="4">
    <source>
    </source>
</evidence>
<evidence type="ECO:0000269" key="5">
    <source>
    </source>
</evidence>
<proteinExistence type="evidence at protein level"/>
<gene>
    <name type="primary">Gata2</name>
</gene>
<feature type="chain" id="PRO_0000083404" description="Endothelial transcription factor GATA-2">
    <location>
        <begin position="1"/>
        <end position="480"/>
    </location>
</feature>
<feature type="zinc finger region" description="GATA-type 1" evidence="2">
    <location>
        <begin position="295"/>
        <end position="319"/>
    </location>
</feature>
<feature type="zinc finger region" description="GATA-type 2" evidence="2">
    <location>
        <begin position="349"/>
        <end position="373"/>
    </location>
</feature>
<feature type="region of interest" description="Disordered" evidence="3">
    <location>
        <begin position="166"/>
        <end position="208"/>
    </location>
</feature>
<feature type="region of interest" description="Disordered" evidence="3">
    <location>
        <begin position="457"/>
        <end position="480"/>
    </location>
</feature>
<feature type="compositionally biased region" description="Low complexity" evidence="3">
    <location>
        <begin position="183"/>
        <end position="201"/>
    </location>
</feature>
<feature type="modified residue" description="Phosphoserine" evidence="1">
    <location>
        <position position="73"/>
    </location>
</feature>
<feature type="modified residue" description="Asymmetric dimethylarginine" evidence="1">
    <location>
        <position position="86"/>
    </location>
</feature>
<feature type="modified residue" description="Phosphoserine" evidence="1">
    <location>
        <position position="192"/>
    </location>
</feature>
<feature type="cross-link" description="Glycyl lysine isopeptide (Lys-Gly) (interchain with G-Cter in SUMO2)" evidence="1">
    <location>
        <position position="389"/>
    </location>
</feature>